<keyword id="KW-0067">ATP-binding</keyword>
<keyword id="KW-0378">Hydrolase</keyword>
<keyword id="KW-0547">Nucleotide-binding</keyword>
<comment type="function">
    <text evidence="1">Catalyzes the cleavage of 5-oxoproline to form L-glutamate coupled to the hydrolysis of ATP to ADP and inorganic phosphate.</text>
</comment>
<comment type="catalytic activity">
    <reaction evidence="1">
        <text>5-oxo-L-proline + ATP + 2 H2O = L-glutamate + ADP + phosphate + H(+)</text>
        <dbReference type="Rhea" id="RHEA:10348"/>
        <dbReference type="ChEBI" id="CHEBI:15377"/>
        <dbReference type="ChEBI" id="CHEBI:15378"/>
        <dbReference type="ChEBI" id="CHEBI:29985"/>
        <dbReference type="ChEBI" id="CHEBI:30616"/>
        <dbReference type="ChEBI" id="CHEBI:43474"/>
        <dbReference type="ChEBI" id="CHEBI:58402"/>
        <dbReference type="ChEBI" id="CHEBI:456216"/>
        <dbReference type="EC" id="3.5.2.9"/>
    </reaction>
</comment>
<comment type="subunit">
    <text evidence="1">Forms a complex composed of PxpA, PxpB and PxpC.</text>
</comment>
<comment type="similarity">
    <text evidence="1">Belongs to the LamB/PxpA family.</text>
</comment>
<sequence length="254" mass="26937">MFVDLNSDLGESFGSWKMGNDDQILPVVTSANIACGFHAGDPLGILKTVRKAVELGVTIGAHVSYPDLVGFGRRNMDLSRDELIADVLYQISALDGLAKVAGSKVQYVKPHGALYNTIAHDQAQAAAVIDAIKMYNPELVLVALAGSNLVEQARVAGLKVVSEAFADRAYNSDGSLVSRRLEGAVLHDSAFVASRVVSMLKNGGVESIDGVFTPIQADTICLHGDTDGALEMSAAIKAELVKNNIEIRPFVNKA</sequence>
<dbReference type="EC" id="3.5.2.9" evidence="1"/>
<dbReference type="EMBL" id="CP000521">
    <property type="protein sequence ID" value="ABO11695.2"/>
    <property type="molecule type" value="Genomic_DNA"/>
</dbReference>
<dbReference type="RefSeq" id="WP_000496075.1">
    <property type="nucleotide sequence ID" value="NZ_CP053098.1"/>
</dbReference>
<dbReference type="SMR" id="A3M451"/>
<dbReference type="KEGG" id="acb:A1S_1267"/>
<dbReference type="HOGENOM" id="CLU_069535_0_0_6"/>
<dbReference type="GO" id="GO:0017168">
    <property type="term" value="F:5-oxoprolinase (ATP-hydrolyzing) activity"/>
    <property type="evidence" value="ECO:0007669"/>
    <property type="project" value="UniProtKB-UniRule"/>
</dbReference>
<dbReference type="GO" id="GO:0005524">
    <property type="term" value="F:ATP binding"/>
    <property type="evidence" value="ECO:0007669"/>
    <property type="project" value="UniProtKB-UniRule"/>
</dbReference>
<dbReference type="GO" id="GO:0005975">
    <property type="term" value="P:carbohydrate metabolic process"/>
    <property type="evidence" value="ECO:0007669"/>
    <property type="project" value="InterPro"/>
</dbReference>
<dbReference type="CDD" id="cd10787">
    <property type="entry name" value="LamB_YcsF_like"/>
    <property type="match status" value="1"/>
</dbReference>
<dbReference type="Gene3D" id="3.20.20.370">
    <property type="entry name" value="Glycoside hydrolase/deacetylase"/>
    <property type="match status" value="1"/>
</dbReference>
<dbReference type="HAMAP" id="MF_00691">
    <property type="entry name" value="PxpA"/>
    <property type="match status" value="1"/>
</dbReference>
<dbReference type="InterPro" id="IPR011330">
    <property type="entry name" value="Glyco_hydro/deAcase_b/a-brl"/>
</dbReference>
<dbReference type="InterPro" id="IPR005501">
    <property type="entry name" value="LamB/YcsF/PxpA-like"/>
</dbReference>
<dbReference type="NCBIfam" id="NF003814">
    <property type="entry name" value="PRK05406.1-3"/>
    <property type="match status" value="1"/>
</dbReference>
<dbReference type="NCBIfam" id="NF003816">
    <property type="entry name" value="PRK05406.1-5"/>
    <property type="match status" value="1"/>
</dbReference>
<dbReference type="PANTHER" id="PTHR30292:SF0">
    <property type="entry name" value="5-OXOPROLINASE SUBUNIT A"/>
    <property type="match status" value="1"/>
</dbReference>
<dbReference type="PANTHER" id="PTHR30292">
    <property type="entry name" value="UNCHARACTERIZED PROTEIN YBGL-RELATED"/>
    <property type="match status" value="1"/>
</dbReference>
<dbReference type="Pfam" id="PF03746">
    <property type="entry name" value="LamB_YcsF"/>
    <property type="match status" value="1"/>
</dbReference>
<dbReference type="SUPFAM" id="SSF88713">
    <property type="entry name" value="Glycoside hydrolase/deacetylase"/>
    <property type="match status" value="1"/>
</dbReference>
<name>PXPA_ACIBT</name>
<reference key="1">
    <citation type="journal article" date="2007" name="Genes Dev.">
        <title>New insights into Acinetobacter baumannii pathogenesis revealed by high-density pyrosequencing and transposon mutagenesis.</title>
        <authorList>
            <person name="Smith M.G."/>
            <person name="Gianoulis T.A."/>
            <person name="Pukatzki S."/>
            <person name="Mekalanos J.J."/>
            <person name="Ornston L.N."/>
            <person name="Gerstein M."/>
            <person name="Snyder M."/>
        </authorList>
    </citation>
    <scope>NUCLEOTIDE SEQUENCE [LARGE SCALE GENOMIC DNA]</scope>
    <source>
        <strain>ATCC 17978 / DSM 105126 / CIP 53.77 / LMG 1025 / NCDC KC755 / 5377</strain>
    </source>
</reference>
<gene>
    <name evidence="1" type="primary">pxpA</name>
    <name type="ordered locus">A1S_1267</name>
</gene>
<accession>A3M451</accession>
<feature type="chain" id="PRO_1000132035" description="5-oxoprolinase subunit A">
    <location>
        <begin position="1"/>
        <end position="254"/>
    </location>
</feature>
<proteinExistence type="inferred from homology"/>
<evidence type="ECO:0000255" key="1">
    <source>
        <dbReference type="HAMAP-Rule" id="MF_00691"/>
    </source>
</evidence>
<organism>
    <name type="scientific">Acinetobacter baumannii (strain ATCC 17978 / DSM 105126 / CIP 53.77 / LMG 1025 / NCDC KC755 / 5377)</name>
    <dbReference type="NCBI Taxonomy" id="400667"/>
    <lineage>
        <taxon>Bacteria</taxon>
        <taxon>Pseudomonadati</taxon>
        <taxon>Pseudomonadota</taxon>
        <taxon>Gammaproteobacteria</taxon>
        <taxon>Moraxellales</taxon>
        <taxon>Moraxellaceae</taxon>
        <taxon>Acinetobacter</taxon>
        <taxon>Acinetobacter calcoaceticus/baumannii complex</taxon>
    </lineage>
</organism>
<protein>
    <recommendedName>
        <fullName evidence="1">5-oxoprolinase subunit A</fullName>
        <shortName evidence="1">5-OPase subunit A</shortName>
        <ecNumber evidence="1">3.5.2.9</ecNumber>
    </recommendedName>
    <alternativeName>
        <fullName evidence="1">5-oxoprolinase (ATP-hydrolyzing) subunit A</fullName>
    </alternativeName>
</protein>